<proteinExistence type="inferred from homology"/>
<gene>
    <name evidence="1" type="primary">queA</name>
    <name type="ordered locus">Tbd_2074</name>
</gene>
<evidence type="ECO:0000255" key="1">
    <source>
        <dbReference type="HAMAP-Rule" id="MF_00113"/>
    </source>
</evidence>
<reference key="1">
    <citation type="journal article" date="2006" name="J. Bacteriol.">
        <title>The genome sequence of the obligately chemolithoautotrophic, facultatively anaerobic bacterium Thiobacillus denitrificans.</title>
        <authorList>
            <person name="Beller H.R."/>
            <person name="Chain P.S."/>
            <person name="Letain T.E."/>
            <person name="Chakicherla A."/>
            <person name="Larimer F.W."/>
            <person name="Richardson P.M."/>
            <person name="Coleman M.A."/>
            <person name="Wood A.P."/>
            <person name="Kelly D.P."/>
        </authorList>
    </citation>
    <scope>NUCLEOTIDE SEQUENCE [LARGE SCALE GENOMIC DNA]</scope>
    <source>
        <strain>ATCC 25259 / T1</strain>
    </source>
</reference>
<dbReference type="EC" id="2.4.99.17" evidence="1"/>
<dbReference type="EMBL" id="CP000116">
    <property type="protein sequence ID" value="AAZ98027.1"/>
    <property type="molecule type" value="Genomic_DNA"/>
</dbReference>
<dbReference type="RefSeq" id="WP_011312586.1">
    <property type="nucleotide sequence ID" value="NC_007404.1"/>
</dbReference>
<dbReference type="SMR" id="Q3SH62"/>
<dbReference type="STRING" id="292415.Tbd_2074"/>
<dbReference type="KEGG" id="tbd:Tbd_2074"/>
<dbReference type="eggNOG" id="COG0809">
    <property type="taxonomic scope" value="Bacteria"/>
</dbReference>
<dbReference type="HOGENOM" id="CLU_039110_1_0_4"/>
<dbReference type="OrthoDB" id="9805933at2"/>
<dbReference type="UniPathway" id="UPA00392"/>
<dbReference type="Proteomes" id="UP000008291">
    <property type="component" value="Chromosome"/>
</dbReference>
<dbReference type="GO" id="GO:0005737">
    <property type="term" value="C:cytoplasm"/>
    <property type="evidence" value="ECO:0007669"/>
    <property type="project" value="UniProtKB-SubCell"/>
</dbReference>
<dbReference type="GO" id="GO:0051075">
    <property type="term" value="F:S-adenosylmethionine:tRNA ribosyltransferase-isomerase activity"/>
    <property type="evidence" value="ECO:0007669"/>
    <property type="project" value="UniProtKB-EC"/>
</dbReference>
<dbReference type="GO" id="GO:0008616">
    <property type="term" value="P:queuosine biosynthetic process"/>
    <property type="evidence" value="ECO:0007669"/>
    <property type="project" value="UniProtKB-UniRule"/>
</dbReference>
<dbReference type="GO" id="GO:0002099">
    <property type="term" value="P:tRNA wobble guanine modification"/>
    <property type="evidence" value="ECO:0007669"/>
    <property type="project" value="TreeGrafter"/>
</dbReference>
<dbReference type="FunFam" id="3.40.1780.10:FF:000001">
    <property type="entry name" value="S-adenosylmethionine:tRNA ribosyltransferase-isomerase"/>
    <property type="match status" value="1"/>
</dbReference>
<dbReference type="Gene3D" id="2.40.10.240">
    <property type="entry name" value="QueA-like"/>
    <property type="match status" value="1"/>
</dbReference>
<dbReference type="Gene3D" id="3.40.1780.10">
    <property type="entry name" value="QueA-like"/>
    <property type="match status" value="1"/>
</dbReference>
<dbReference type="HAMAP" id="MF_00113">
    <property type="entry name" value="QueA"/>
    <property type="match status" value="1"/>
</dbReference>
<dbReference type="InterPro" id="IPR003699">
    <property type="entry name" value="QueA"/>
</dbReference>
<dbReference type="InterPro" id="IPR042118">
    <property type="entry name" value="QueA_dom1"/>
</dbReference>
<dbReference type="InterPro" id="IPR042119">
    <property type="entry name" value="QueA_dom2"/>
</dbReference>
<dbReference type="InterPro" id="IPR036100">
    <property type="entry name" value="QueA_sf"/>
</dbReference>
<dbReference type="NCBIfam" id="NF001140">
    <property type="entry name" value="PRK00147.1"/>
    <property type="match status" value="1"/>
</dbReference>
<dbReference type="NCBIfam" id="TIGR00113">
    <property type="entry name" value="queA"/>
    <property type="match status" value="1"/>
</dbReference>
<dbReference type="PANTHER" id="PTHR30307">
    <property type="entry name" value="S-ADENOSYLMETHIONINE:TRNA RIBOSYLTRANSFERASE-ISOMERASE"/>
    <property type="match status" value="1"/>
</dbReference>
<dbReference type="PANTHER" id="PTHR30307:SF0">
    <property type="entry name" value="S-ADENOSYLMETHIONINE:TRNA RIBOSYLTRANSFERASE-ISOMERASE"/>
    <property type="match status" value="1"/>
</dbReference>
<dbReference type="Pfam" id="PF02547">
    <property type="entry name" value="Queuosine_synth"/>
    <property type="match status" value="1"/>
</dbReference>
<dbReference type="SUPFAM" id="SSF111337">
    <property type="entry name" value="QueA-like"/>
    <property type="match status" value="1"/>
</dbReference>
<protein>
    <recommendedName>
        <fullName evidence="1">S-adenosylmethionine:tRNA ribosyltransferase-isomerase</fullName>
        <ecNumber evidence="1">2.4.99.17</ecNumber>
    </recommendedName>
    <alternativeName>
        <fullName evidence="1">Queuosine biosynthesis protein QueA</fullName>
    </alternativeName>
</protein>
<comment type="function">
    <text evidence="1">Transfers and isomerizes the ribose moiety from AdoMet to the 7-aminomethyl group of 7-deazaguanine (preQ1-tRNA) to give epoxyqueuosine (oQ-tRNA).</text>
</comment>
<comment type="catalytic activity">
    <reaction evidence="1">
        <text>7-aminomethyl-7-carbaguanosine(34) in tRNA + S-adenosyl-L-methionine = epoxyqueuosine(34) in tRNA + adenine + L-methionine + 2 H(+)</text>
        <dbReference type="Rhea" id="RHEA:32155"/>
        <dbReference type="Rhea" id="RHEA-COMP:10342"/>
        <dbReference type="Rhea" id="RHEA-COMP:18582"/>
        <dbReference type="ChEBI" id="CHEBI:15378"/>
        <dbReference type="ChEBI" id="CHEBI:16708"/>
        <dbReference type="ChEBI" id="CHEBI:57844"/>
        <dbReference type="ChEBI" id="CHEBI:59789"/>
        <dbReference type="ChEBI" id="CHEBI:82833"/>
        <dbReference type="ChEBI" id="CHEBI:194443"/>
        <dbReference type="EC" id="2.4.99.17"/>
    </reaction>
</comment>
<comment type="pathway">
    <text evidence="1">tRNA modification; tRNA-queuosine biosynthesis.</text>
</comment>
<comment type="subunit">
    <text evidence="1">Monomer.</text>
</comment>
<comment type="subcellular location">
    <subcellularLocation>
        <location evidence="1">Cytoplasm</location>
    </subcellularLocation>
</comment>
<comment type="similarity">
    <text evidence="1">Belongs to the QueA family.</text>
</comment>
<feature type="chain" id="PRO_0000231386" description="S-adenosylmethionine:tRNA ribosyltransferase-isomerase">
    <location>
        <begin position="1"/>
        <end position="344"/>
    </location>
</feature>
<name>QUEA_THIDA</name>
<sequence>MRVADFDFELPPDLIAQFPPDVRGASRLLHVTAAGALHDRMFRELPTLLGADDLLVMNDTRVIKARLFGEKDSGGRVELLVERVTGEFEALAFIRASHAPKPGARIRLADDVALDVLDKQHDLTRLHFPAPVLDVLDRCGRLPLPPYIEHAPTEEDEARYQTVYANEPGAVAAPTAGLHFDAAMLGTLQTQGVRTARVTLHVGAGTFQPVRVAEVADHVMHSERYTVPAATVAAIAETRARGGRVVAVGTTSLRALEAASASGSVEAGVGETAIFITPGYRFRTVDALVTNFHLPRSTLLMLVSAFSGIETIRRAYAHAIAERYRFFSYGDAMFLEKASLETPA</sequence>
<accession>Q3SH62</accession>
<organism>
    <name type="scientific">Thiobacillus denitrificans (strain ATCC 25259 / T1)</name>
    <dbReference type="NCBI Taxonomy" id="292415"/>
    <lineage>
        <taxon>Bacteria</taxon>
        <taxon>Pseudomonadati</taxon>
        <taxon>Pseudomonadota</taxon>
        <taxon>Betaproteobacteria</taxon>
        <taxon>Nitrosomonadales</taxon>
        <taxon>Thiobacillaceae</taxon>
        <taxon>Thiobacillus</taxon>
    </lineage>
</organism>
<keyword id="KW-0963">Cytoplasm</keyword>
<keyword id="KW-0671">Queuosine biosynthesis</keyword>
<keyword id="KW-1185">Reference proteome</keyword>
<keyword id="KW-0949">S-adenosyl-L-methionine</keyword>
<keyword id="KW-0808">Transferase</keyword>